<name>RS9_PHOLL</name>
<reference key="1">
    <citation type="journal article" date="2003" name="Nat. Biotechnol.">
        <title>The genome sequence of the entomopathogenic bacterium Photorhabdus luminescens.</title>
        <authorList>
            <person name="Duchaud E."/>
            <person name="Rusniok C."/>
            <person name="Frangeul L."/>
            <person name="Buchrieser C."/>
            <person name="Givaudan A."/>
            <person name="Taourit S."/>
            <person name="Bocs S."/>
            <person name="Boursaux-Eude C."/>
            <person name="Chandler M."/>
            <person name="Charles J.-F."/>
            <person name="Dassa E."/>
            <person name="Derose R."/>
            <person name="Derzelle S."/>
            <person name="Freyssinet G."/>
            <person name="Gaudriault S."/>
            <person name="Medigue C."/>
            <person name="Lanois A."/>
            <person name="Powell K."/>
            <person name="Siguier P."/>
            <person name="Vincent R."/>
            <person name="Wingate V."/>
            <person name="Zouine M."/>
            <person name="Glaser P."/>
            <person name="Boemare N."/>
            <person name="Danchin A."/>
            <person name="Kunst F."/>
        </authorList>
    </citation>
    <scope>NUCLEOTIDE SEQUENCE [LARGE SCALE GENOMIC DNA]</scope>
    <source>
        <strain>DSM 15139 / CIP 105565 / TT01</strain>
    </source>
</reference>
<organism>
    <name type="scientific">Photorhabdus laumondii subsp. laumondii (strain DSM 15139 / CIP 105565 / TT01)</name>
    <name type="common">Photorhabdus luminescens subsp. laumondii</name>
    <dbReference type="NCBI Taxonomy" id="243265"/>
    <lineage>
        <taxon>Bacteria</taxon>
        <taxon>Pseudomonadati</taxon>
        <taxon>Pseudomonadota</taxon>
        <taxon>Gammaproteobacteria</taxon>
        <taxon>Enterobacterales</taxon>
        <taxon>Morganellaceae</taxon>
        <taxon>Photorhabdus</taxon>
    </lineage>
</organism>
<dbReference type="EMBL" id="BX571872">
    <property type="protein sequence ID" value="CAE16386.1"/>
    <property type="molecule type" value="Genomic_DNA"/>
</dbReference>
<dbReference type="RefSeq" id="WP_011148146.1">
    <property type="nucleotide sequence ID" value="NC_005126.1"/>
</dbReference>
<dbReference type="SMR" id="Q7N079"/>
<dbReference type="STRING" id="243265.plu4014"/>
<dbReference type="GeneID" id="88806622"/>
<dbReference type="KEGG" id="plu:plu4014"/>
<dbReference type="eggNOG" id="COG0103">
    <property type="taxonomic scope" value="Bacteria"/>
</dbReference>
<dbReference type="HOGENOM" id="CLU_046483_2_1_6"/>
<dbReference type="OrthoDB" id="9803965at2"/>
<dbReference type="Proteomes" id="UP000002514">
    <property type="component" value="Chromosome"/>
</dbReference>
<dbReference type="GO" id="GO:0022627">
    <property type="term" value="C:cytosolic small ribosomal subunit"/>
    <property type="evidence" value="ECO:0007669"/>
    <property type="project" value="TreeGrafter"/>
</dbReference>
<dbReference type="GO" id="GO:0003723">
    <property type="term" value="F:RNA binding"/>
    <property type="evidence" value="ECO:0007669"/>
    <property type="project" value="TreeGrafter"/>
</dbReference>
<dbReference type="GO" id="GO:0003735">
    <property type="term" value="F:structural constituent of ribosome"/>
    <property type="evidence" value="ECO:0007669"/>
    <property type="project" value="InterPro"/>
</dbReference>
<dbReference type="GO" id="GO:0006412">
    <property type="term" value="P:translation"/>
    <property type="evidence" value="ECO:0007669"/>
    <property type="project" value="UniProtKB-UniRule"/>
</dbReference>
<dbReference type="FunFam" id="3.30.230.10:FF:000001">
    <property type="entry name" value="30S ribosomal protein S9"/>
    <property type="match status" value="1"/>
</dbReference>
<dbReference type="Gene3D" id="3.30.230.10">
    <property type="match status" value="1"/>
</dbReference>
<dbReference type="HAMAP" id="MF_00532_B">
    <property type="entry name" value="Ribosomal_uS9_B"/>
    <property type="match status" value="1"/>
</dbReference>
<dbReference type="InterPro" id="IPR020568">
    <property type="entry name" value="Ribosomal_Su5_D2-typ_SF"/>
</dbReference>
<dbReference type="InterPro" id="IPR000754">
    <property type="entry name" value="Ribosomal_uS9"/>
</dbReference>
<dbReference type="InterPro" id="IPR023035">
    <property type="entry name" value="Ribosomal_uS9_bac/plastid"/>
</dbReference>
<dbReference type="InterPro" id="IPR020574">
    <property type="entry name" value="Ribosomal_uS9_CS"/>
</dbReference>
<dbReference type="InterPro" id="IPR014721">
    <property type="entry name" value="Ribsml_uS5_D2-typ_fold_subgr"/>
</dbReference>
<dbReference type="NCBIfam" id="NF001099">
    <property type="entry name" value="PRK00132.1"/>
    <property type="match status" value="1"/>
</dbReference>
<dbReference type="PANTHER" id="PTHR21569">
    <property type="entry name" value="RIBOSOMAL PROTEIN S9"/>
    <property type="match status" value="1"/>
</dbReference>
<dbReference type="PANTHER" id="PTHR21569:SF1">
    <property type="entry name" value="SMALL RIBOSOMAL SUBUNIT PROTEIN US9M"/>
    <property type="match status" value="1"/>
</dbReference>
<dbReference type="Pfam" id="PF00380">
    <property type="entry name" value="Ribosomal_S9"/>
    <property type="match status" value="1"/>
</dbReference>
<dbReference type="SUPFAM" id="SSF54211">
    <property type="entry name" value="Ribosomal protein S5 domain 2-like"/>
    <property type="match status" value="1"/>
</dbReference>
<dbReference type="PROSITE" id="PS00360">
    <property type="entry name" value="RIBOSOMAL_S9"/>
    <property type="match status" value="1"/>
</dbReference>
<protein>
    <recommendedName>
        <fullName evidence="1">Small ribosomal subunit protein uS9</fullName>
    </recommendedName>
    <alternativeName>
        <fullName evidence="2">30S ribosomal protein S9</fullName>
    </alternativeName>
</protein>
<feature type="chain" id="PRO_0000111386" description="Small ribosomal subunit protein uS9">
    <location>
        <begin position="1"/>
        <end position="130"/>
    </location>
</feature>
<comment type="similarity">
    <text evidence="1">Belongs to the universal ribosomal protein uS9 family.</text>
</comment>
<accession>Q7N079</accession>
<keyword id="KW-1185">Reference proteome</keyword>
<keyword id="KW-0687">Ribonucleoprotein</keyword>
<keyword id="KW-0689">Ribosomal protein</keyword>
<sequence>MAENQYYGTGRRKSSSARVFIKPGSGNIVINKRSLEVYFGRETARMVVRQPLELVDMLGKLDLYITVKGGGISGQAGAIRHGITRALMAYDETLRSDLRKAGFVTRDAREVERKKVGLRKARRRPQFSKR</sequence>
<evidence type="ECO:0000255" key="1">
    <source>
        <dbReference type="HAMAP-Rule" id="MF_00532"/>
    </source>
</evidence>
<evidence type="ECO:0000305" key="2"/>
<gene>
    <name evidence="1" type="primary">rpsI</name>
    <name type="ordered locus">plu4014</name>
</gene>
<proteinExistence type="inferred from homology"/>